<feature type="chain" id="PRO_0000184887" description="3-methyl-2-oxobutanoate hydroxymethyltransferase">
    <location>
        <begin position="1"/>
        <end position="264"/>
    </location>
</feature>
<feature type="active site" description="Proton acceptor" evidence="1">
    <location>
        <position position="181"/>
    </location>
</feature>
<feature type="binding site" evidence="1">
    <location>
        <begin position="45"/>
        <end position="46"/>
    </location>
    <ligand>
        <name>3-methyl-2-oxobutanoate</name>
        <dbReference type="ChEBI" id="CHEBI:11851"/>
    </ligand>
</feature>
<feature type="binding site" evidence="1">
    <location>
        <position position="45"/>
    </location>
    <ligand>
        <name>Mg(2+)</name>
        <dbReference type="ChEBI" id="CHEBI:18420"/>
    </ligand>
</feature>
<feature type="binding site" evidence="1">
    <location>
        <position position="84"/>
    </location>
    <ligand>
        <name>3-methyl-2-oxobutanoate</name>
        <dbReference type="ChEBI" id="CHEBI:11851"/>
    </ligand>
</feature>
<feature type="binding site" evidence="1">
    <location>
        <position position="84"/>
    </location>
    <ligand>
        <name>Mg(2+)</name>
        <dbReference type="ChEBI" id="CHEBI:18420"/>
    </ligand>
</feature>
<feature type="binding site" evidence="1">
    <location>
        <position position="112"/>
    </location>
    <ligand>
        <name>3-methyl-2-oxobutanoate</name>
        <dbReference type="ChEBI" id="CHEBI:11851"/>
    </ligand>
</feature>
<feature type="binding site" evidence="1">
    <location>
        <position position="114"/>
    </location>
    <ligand>
        <name>Mg(2+)</name>
        <dbReference type="ChEBI" id="CHEBI:18420"/>
    </ligand>
</feature>
<gene>
    <name evidence="1" type="primary">panB</name>
    <name type="ordered locus">SF0131</name>
    <name type="ordered locus">S0133</name>
</gene>
<name>PANB_SHIFL</name>
<protein>
    <recommendedName>
        <fullName evidence="1">3-methyl-2-oxobutanoate hydroxymethyltransferase</fullName>
        <ecNumber evidence="1">2.1.2.11</ecNumber>
    </recommendedName>
    <alternativeName>
        <fullName evidence="1">Ketopantoate hydroxymethyltransferase</fullName>
        <shortName evidence="1">KPHMT</shortName>
    </alternativeName>
</protein>
<accession>Q83ME5</accession>
<reference key="1">
    <citation type="journal article" date="2002" name="Nucleic Acids Res.">
        <title>Genome sequence of Shigella flexneri 2a: insights into pathogenicity through comparison with genomes of Escherichia coli K12 and O157.</title>
        <authorList>
            <person name="Jin Q."/>
            <person name="Yuan Z."/>
            <person name="Xu J."/>
            <person name="Wang Y."/>
            <person name="Shen Y."/>
            <person name="Lu W."/>
            <person name="Wang J."/>
            <person name="Liu H."/>
            <person name="Yang J."/>
            <person name="Yang F."/>
            <person name="Zhang X."/>
            <person name="Zhang J."/>
            <person name="Yang G."/>
            <person name="Wu H."/>
            <person name="Qu D."/>
            <person name="Dong J."/>
            <person name="Sun L."/>
            <person name="Xue Y."/>
            <person name="Zhao A."/>
            <person name="Gao Y."/>
            <person name="Zhu J."/>
            <person name="Kan B."/>
            <person name="Ding K."/>
            <person name="Chen S."/>
            <person name="Cheng H."/>
            <person name="Yao Z."/>
            <person name="He B."/>
            <person name="Chen R."/>
            <person name="Ma D."/>
            <person name="Qiang B."/>
            <person name="Wen Y."/>
            <person name="Hou Y."/>
            <person name="Yu J."/>
        </authorList>
    </citation>
    <scope>NUCLEOTIDE SEQUENCE [LARGE SCALE GENOMIC DNA]</scope>
    <source>
        <strain>301 / Serotype 2a</strain>
    </source>
</reference>
<reference key="2">
    <citation type="journal article" date="2003" name="Infect. Immun.">
        <title>Complete genome sequence and comparative genomics of Shigella flexneri serotype 2a strain 2457T.</title>
        <authorList>
            <person name="Wei J."/>
            <person name="Goldberg M.B."/>
            <person name="Burland V."/>
            <person name="Venkatesan M.M."/>
            <person name="Deng W."/>
            <person name="Fournier G."/>
            <person name="Mayhew G.F."/>
            <person name="Plunkett G. III"/>
            <person name="Rose D.J."/>
            <person name="Darling A."/>
            <person name="Mau B."/>
            <person name="Perna N.T."/>
            <person name="Payne S.M."/>
            <person name="Runyen-Janecky L.J."/>
            <person name="Zhou S."/>
            <person name="Schwartz D.C."/>
            <person name="Blattner F.R."/>
        </authorList>
    </citation>
    <scope>NUCLEOTIDE SEQUENCE [LARGE SCALE GENOMIC DNA]</scope>
    <source>
        <strain>ATCC 700930 / 2457T / Serotype 2a</strain>
    </source>
</reference>
<organism>
    <name type="scientific">Shigella flexneri</name>
    <dbReference type="NCBI Taxonomy" id="623"/>
    <lineage>
        <taxon>Bacteria</taxon>
        <taxon>Pseudomonadati</taxon>
        <taxon>Pseudomonadota</taxon>
        <taxon>Gammaproteobacteria</taxon>
        <taxon>Enterobacterales</taxon>
        <taxon>Enterobacteriaceae</taxon>
        <taxon>Shigella</taxon>
    </lineage>
</organism>
<comment type="function">
    <text evidence="1">Catalyzes the reversible reaction in which hydroxymethyl group from 5,10-methylenetetrahydrofolate is transferred onto alpha-ketoisovalerate to form ketopantoate.</text>
</comment>
<comment type="catalytic activity">
    <reaction evidence="1">
        <text>3-methyl-2-oxobutanoate + (6R)-5,10-methylene-5,6,7,8-tetrahydrofolate + H2O = 2-dehydropantoate + (6S)-5,6,7,8-tetrahydrofolate</text>
        <dbReference type="Rhea" id="RHEA:11824"/>
        <dbReference type="ChEBI" id="CHEBI:11561"/>
        <dbReference type="ChEBI" id="CHEBI:11851"/>
        <dbReference type="ChEBI" id="CHEBI:15377"/>
        <dbReference type="ChEBI" id="CHEBI:15636"/>
        <dbReference type="ChEBI" id="CHEBI:57453"/>
        <dbReference type="EC" id="2.1.2.11"/>
    </reaction>
</comment>
<comment type="cofactor">
    <cofactor evidence="1">
        <name>Mg(2+)</name>
        <dbReference type="ChEBI" id="CHEBI:18420"/>
    </cofactor>
    <text evidence="1">Binds 1 Mg(2+) ion per subunit.</text>
</comment>
<comment type="pathway">
    <text evidence="1">Cofactor biosynthesis; (R)-pantothenate biosynthesis; (R)-pantoate from 3-methyl-2-oxobutanoate: step 1/2.</text>
</comment>
<comment type="subunit">
    <text evidence="1">Homodecamer; pentamer of dimers.</text>
</comment>
<comment type="subcellular location">
    <subcellularLocation>
        <location evidence="1">Cytoplasm</location>
    </subcellularLocation>
</comment>
<comment type="similarity">
    <text evidence="1">Belongs to the PanB family.</text>
</comment>
<evidence type="ECO:0000255" key="1">
    <source>
        <dbReference type="HAMAP-Rule" id="MF_00156"/>
    </source>
</evidence>
<sequence>MKPTTIASLQKYKQDKKRFATITAYDYSFAKLFADEGLNVMLVGDSLGMTVQGHDSTLPVTVADIAYHTAAVRRGAPNCLLLADLPFMAYATPEQAFENAATVMRAGANMVKIEGGEWLVETVKMLTERAVPVCGHLGLTPQSVNIFGGYKVQGRGNEASDRLLSDALALEAAGAQLLVLECVPVELAKRITEALAIPVIGIGAGNVTDGQILVMHDAFGITGGHIPKFAKNFLAETGDIRAAVRQYMAEVESGVYPGEEHSFH</sequence>
<dbReference type="EC" id="2.1.2.11" evidence="1"/>
<dbReference type="EMBL" id="AE005674">
    <property type="protein sequence ID" value="AAN41794.1"/>
    <property type="molecule type" value="Genomic_DNA"/>
</dbReference>
<dbReference type="EMBL" id="AE014073">
    <property type="protein sequence ID" value="AAP15675.1"/>
    <property type="molecule type" value="Genomic_DNA"/>
</dbReference>
<dbReference type="RefSeq" id="NP_706087.1">
    <property type="nucleotide sequence ID" value="NC_004337.2"/>
</dbReference>
<dbReference type="RefSeq" id="WP_000805476.1">
    <property type="nucleotide sequence ID" value="NZ_WPGW01000007.1"/>
</dbReference>
<dbReference type="SMR" id="Q83ME5"/>
<dbReference type="STRING" id="198214.SF0131"/>
<dbReference type="PaxDb" id="198214-SF0131"/>
<dbReference type="GeneID" id="1024497"/>
<dbReference type="KEGG" id="sfl:SF0131"/>
<dbReference type="KEGG" id="sfx:S0133"/>
<dbReference type="PATRIC" id="fig|198214.7.peg.147"/>
<dbReference type="HOGENOM" id="CLU_036645_1_0_6"/>
<dbReference type="UniPathway" id="UPA00028">
    <property type="reaction ID" value="UER00003"/>
</dbReference>
<dbReference type="Proteomes" id="UP000001006">
    <property type="component" value="Chromosome"/>
</dbReference>
<dbReference type="Proteomes" id="UP000002673">
    <property type="component" value="Chromosome"/>
</dbReference>
<dbReference type="GO" id="GO:0005737">
    <property type="term" value="C:cytoplasm"/>
    <property type="evidence" value="ECO:0007669"/>
    <property type="project" value="UniProtKB-SubCell"/>
</dbReference>
<dbReference type="GO" id="GO:0003864">
    <property type="term" value="F:3-methyl-2-oxobutanoate hydroxymethyltransferase activity"/>
    <property type="evidence" value="ECO:0007669"/>
    <property type="project" value="UniProtKB-UniRule"/>
</dbReference>
<dbReference type="GO" id="GO:0000287">
    <property type="term" value="F:magnesium ion binding"/>
    <property type="evidence" value="ECO:0007669"/>
    <property type="project" value="TreeGrafter"/>
</dbReference>
<dbReference type="GO" id="GO:0015940">
    <property type="term" value="P:pantothenate biosynthetic process"/>
    <property type="evidence" value="ECO:0007669"/>
    <property type="project" value="UniProtKB-UniRule"/>
</dbReference>
<dbReference type="CDD" id="cd06557">
    <property type="entry name" value="KPHMT-like"/>
    <property type="match status" value="1"/>
</dbReference>
<dbReference type="FunFam" id="3.20.20.60:FF:000003">
    <property type="entry name" value="3-methyl-2-oxobutanoate hydroxymethyltransferase"/>
    <property type="match status" value="1"/>
</dbReference>
<dbReference type="Gene3D" id="3.20.20.60">
    <property type="entry name" value="Phosphoenolpyruvate-binding domains"/>
    <property type="match status" value="1"/>
</dbReference>
<dbReference type="HAMAP" id="MF_00156">
    <property type="entry name" value="PanB"/>
    <property type="match status" value="1"/>
</dbReference>
<dbReference type="InterPro" id="IPR003700">
    <property type="entry name" value="Pantoate_hydroxy_MeTrfase"/>
</dbReference>
<dbReference type="InterPro" id="IPR015813">
    <property type="entry name" value="Pyrv/PenolPyrv_kinase-like_dom"/>
</dbReference>
<dbReference type="InterPro" id="IPR040442">
    <property type="entry name" value="Pyrv_kinase-like_dom_sf"/>
</dbReference>
<dbReference type="NCBIfam" id="TIGR00222">
    <property type="entry name" value="panB"/>
    <property type="match status" value="1"/>
</dbReference>
<dbReference type="NCBIfam" id="NF001452">
    <property type="entry name" value="PRK00311.1"/>
    <property type="match status" value="1"/>
</dbReference>
<dbReference type="PANTHER" id="PTHR20881">
    <property type="entry name" value="3-METHYL-2-OXOBUTANOATE HYDROXYMETHYLTRANSFERASE"/>
    <property type="match status" value="1"/>
</dbReference>
<dbReference type="PANTHER" id="PTHR20881:SF0">
    <property type="entry name" value="3-METHYL-2-OXOBUTANOATE HYDROXYMETHYLTRANSFERASE"/>
    <property type="match status" value="1"/>
</dbReference>
<dbReference type="Pfam" id="PF02548">
    <property type="entry name" value="Pantoate_transf"/>
    <property type="match status" value="1"/>
</dbReference>
<dbReference type="PIRSF" id="PIRSF000388">
    <property type="entry name" value="Pantoate_hydroxy_MeTrfase"/>
    <property type="match status" value="1"/>
</dbReference>
<dbReference type="SUPFAM" id="SSF51621">
    <property type="entry name" value="Phosphoenolpyruvate/pyruvate domain"/>
    <property type="match status" value="1"/>
</dbReference>
<keyword id="KW-0963">Cytoplasm</keyword>
<keyword id="KW-0460">Magnesium</keyword>
<keyword id="KW-0479">Metal-binding</keyword>
<keyword id="KW-0566">Pantothenate biosynthesis</keyword>
<keyword id="KW-1185">Reference proteome</keyword>
<keyword id="KW-0808">Transferase</keyword>
<proteinExistence type="inferred from homology"/>